<keyword id="KW-0067">ATP-binding</keyword>
<keyword id="KW-0106">Calcium</keyword>
<keyword id="KW-0418">Kinase</keyword>
<keyword id="KW-0449">Lipoprotein</keyword>
<keyword id="KW-0472">Membrane</keyword>
<keyword id="KW-0479">Metal-binding</keyword>
<keyword id="KW-0519">Myristate</keyword>
<keyword id="KW-0547">Nucleotide-binding</keyword>
<keyword id="KW-1185">Reference proteome</keyword>
<keyword id="KW-0677">Repeat</keyword>
<keyword id="KW-0723">Serine/threonine-protein kinase</keyword>
<keyword id="KW-0808">Transferase</keyword>
<organism>
    <name type="scientific">Oryza sativa subsp. japonica</name>
    <name type="common">Rice</name>
    <dbReference type="NCBI Taxonomy" id="39947"/>
    <lineage>
        <taxon>Eukaryota</taxon>
        <taxon>Viridiplantae</taxon>
        <taxon>Streptophyta</taxon>
        <taxon>Embryophyta</taxon>
        <taxon>Tracheophyta</taxon>
        <taxon>Spermatophyta</taxon>
        <taxon>Magnoliopsida</taxon>
        <taxon>Liliopsida</taxon>
        <taxon>Poales</taxon>
        <taxon>Poaceae</taxon>
        <taxon>BOP clade</taxon>
        <taxon>Oryzoideae</taxon>
        <taxon>Oryzeae</taxon>
        <taxon>Oryzinae</taxon>
        <taxon>Oryza</taxon>
        <taxon>Oryza sativa</taxon>
    </lineage>
</organism>
<dbReference type="EC" id="2.7.11.1" evidence="7"/>
<dbReference type="EMBL" id="AP004082">
    <property type="protein sequence ID" value="BAD23010.1"/>
    <property type="molecule type" value="Genomic_DNA"/>
</dbReference>
<dbReference type="EMBL" id="AP008208">
    <property type="protein sequence ID" value="BAF10538.1"/>
    <property type="molecule type" value="Genomic_DNA"/>
</dbReference>
<dbReference type="EMBL" id="AP014958">
    <property type="protein sequence ID" value="BAS81763.1"/>
    <property type="molecule type" value="Genomic_DNA"/>
</dbReference>
<dbReference type="EMBL" id="AK069127">
    <property type="status" value="NOT_ANNOTATED_CDS"/>
    <property type="molecule type" value="mRNA"/>
</dbReference>
<dbReference type="RefSeq" id="XP_015624615.1">
    <property type="nucleotide sequence ID" value="XM_015769129.1"/>
</dbReference>
<dbReference type="SMR" id="Q6K968"/>
<dbReference type="FunCoup" id="Q6K968">
    <property type="interactions" value="1674"/>
</dbReference>
<dbReference type="STRING" id="39947.Q6K968"/>
<dbReference type="PaxDb" id="39947-Q6K968"/>
<dbReference type="EnsemblPlants" id="Os02t0832000-01">
    <property type="protein sequence ID" value="Os02t0832000-01"/>
    <property type="gene ID" value="Os02g0832000"/>
</dbReference>
<dbReference type="Gramene" id="Os02t0832000-01">
    <property type="protein sequence ID" value="Os02t0832000-01"/>
    <property type="gene ID" value="Os02g0832000"/>
</dbReference>
<dbReference type="KEGG" id="dosa:Os02g0832000"/>
<dbReference type="eggNOG" id="KOG0032">
    <property type="taxonomic scope" value="Eukaryota"/>
</dbReference>
<dbReference type="HOGENOM" id="CLU_000288_37_4_1"/>
<dbReference type="InParanoid" id="Q6K968"/>
<dbReference type="OMA" id="MRHNSDG"/>
<dbReference type="OrthoDB" id="40902at2759"/>
<dbReference type="Proteomes" id="UP000000763">
    <property type="component" value="Chromosome 2"/>
</dbReference>
<dbReference type="Proteomes" id="UP000059680">
    <property type="component" value="Chromosome 2"/>
</dbReference>
<dbReference type="GO" id="GO:0005737">
    <property type="term" value="C:cytoplasm"/>
    <property type="evidence" value="ECO:0000318"/>
    <property type="project" value="GO_Central"/>
</dbReference>
<dbReference type="GO" id="GO:0016020">
    <property type="term" value="C:membrane"/>
    <property type="evidence" value="ECO:0007669"/>
    <property type="project" value="UniProtKB-SubCell"/>
</dbReference>
<dbReference type="GO" id="GO:0005634">
    <property type="term" value="C:nucleus"/>
    <property type="evidence" value="ECO:0000318"/>
    <property type="project" value="GO_Central"/>
</dbReference>
<dbReference type="GO" id="GO:0005524">
    <property type="term" value="F:ATP binding"/>
    <property type="evidence" value="ECO:0007669"/>
    <property type="project" value="UniProtKB-KW"/>
</dbReference>
<dbReference type="GO" id="GO:0005509">
    <property type="term" value="F:calcium ion binding"/>
    <property type="evidence" value="ECO:0007669"/>
    <property type="project" value="InterPro"/>
</dbReference>
<dbReference type="GO" id="GO:0009931">
    <property type="term" value="F:calcium-dependent protein serine/threonine kinase activity"/>
    <property type="evidence" value="ECO:0000318"/>
    <property type="project" value="GO_Central"/>
</dbReference>
<dbReference type="GO" id="GO:0004683">
    <property type="term" value="F:calcium/calmodulin-dependent protein kinase activity"/>
    <property type="evidence" value="ECO:0000318"/>
    <property type="project" value="GO_Central"/>
</dbReference>
<dbReference type="GO" id="GO:0005516">
    <property type="term" value="F:calmodulin binding"/>
    <property type="evidence" value="ECO:0000318"/>
    <property type="project" value="GO_Central"/>
</dbReference>
<dbReference type="GO" id="GO:0106310">
    <property type="term" value="F:protein serine kinase activity"/>
    <property type="evidence" value="ECO:0007669"/>
    <property type="project" value="RHEA"/>
</dbReference>
<dbReference type="GO" id="GO:0035556">
    <property type="term" value="P:intracellular signal transduction"/>
    <property type="evidence" value="ECO:0000318"/>
    <property type="project" value="GO_Central"/>
</dbReference>
<dbReference type="CDD" id="cd00051">
    <property type="entry name" value="EFh"/>
    <property type="match status" value="2"/>
</dbReference>
<dbReference type="CDD" id="cd05117">
    <property type="entry name" value="STKc_CAMK"/>
    <property type="match status" value="1"/>
</dbReference>
<dbReference type="FunFam" id="1.10.238.10:FF:000015">
    <property type="entry name" value="Calcium-dependent protein kinase 1"/>
    <property type="match status" value="1"/>
</dbReference>
<dbReference type="FunFam" id="3.30.200.20:FF:000004">
    <property type="entry name" value="Calcium-dependent protein kinase 1"/>
    <property type="match status" value="1"/>
</dbReference>
<dbReference type="FunFam" id="1.10.510.10:FF:000178">
    <property type="entry name" value="Calcium-dependent protein kinase 5"/>
    <property type="match status" value="1"/>
</dbReference>
<dbReference type="Gene3D" id="1.10.238.10">
    <property type="entry name" value="EF-hand"/>
    <property type="match status" value="1"/>
</dbReference>
<dbReference type="Gene3D" id="3.30.200.20">
    <property type="entry name" value="Phosphorylase Kinase, domain 1"/>
    <property type="match status" value="1"/>
</dbReference>
<dbReference type="Gene3D" id="1.10.510.10">
    <property type="entry name" value="Transferase(Phosphotransferase) domain 1"/>
    <property type="match status" value="1"/>
</dbReference>
<dbReference type="InterPro" id="IPR050205">
    <property type="entry name" value="CDPK_Ser/Thr_kinases"/>
</dbReference>
<dbReference type="InterPro" id="IPR011992">
    <property type="entry name" value="EF-hand-dom_pair"/>
</dbReference>
<dbReference type="InterPro" id="IPR018247">
    <property type="entry name" value="EF_Hand_1_Ca_BS"/>
</dbReference>
<dbReference type="InterPro" id="IPR002048">
    <property type="entry name" value="EF_hand_dom"/>
</dbReference>
<dbReference type="InterPro" id="IPR011009">
    <property type="entry name" value="Kinase-like_dom_sf"/>
</dbReference>
<dbReference type="InterPro" id="IPR000719">
    <property type="entry name" value="Prot_kinase_dom"/>
</dbReference>
<dbReference type="InterPro" id="IPR017441">
    <property type="entry name" value="Protein_kinase_ATP_BS"/>
</dbReference>
<dbReference type="InterPro" id="IPR008271">
    <property type="entry name" value="Ser/Thr_kinase_AS"/>
</dbReference>
<dbReference type="PANTHER" id="PTHR24349">
    <property type="entry name" value="SERINE/THREONINE-PROTEIN KINASE"/>
    <property type="match status" value="1"/>
</dbReference>
<dbReference type="Pfam" id="PF13499">
    <property type="entry name" value="EF-hand_7"/>
    <property type="match status" value="2"/>
</dbReference>
<dbReference type="Pfam" id="PF00069">
    <property type="entry name" value="Pkinase"/>
    <property type="match status" value="1"/>
</dbReference>
<dbReference type="SMART" id="SM00054">
    <property type="entry name" value="EFh"/>
    <property type="match status" value="4"/>
</dbReference>
<dbReference type="SMART" id="SM00220">
    <property type="entry name" value="S_TKc"/>
    <property type="match status" value="1"/>
</dbReference>
<dbReference type="SUPFAM" id="SSF47473">
    <property type="entry name" value="EF-hand"/>
    <property type="match status" value="1"/>
</dbReference>
<dbReference type="SUPFAM" id="SSF56112">
    <property type="entry name" value="Protein kinase-like (PK-like)"/>
    <property type="match status" value="1"/>
</dbReference>
<dbReference type="PROSITE" id="PS00018">
    <property type="entry name" value="EF_HAND_1"/>
    <property type="match status" value="4"/>
</dbReference>
<dbReference type="PROSITE" id="PS50222">
    <property type="entry name" value="EF_HAND_2"/>
    <property type="match status" value="4"/>
</dbReference>
<dbReference type="PROSITE" id="PS00107">
    <property type="entry name" value="PROTEIN_KINASE_ATP"/>
    <property type="match status" value="1"/>
</dbReference>
<dbReference type="PROSITE" id="PS50011">
    <property type="entry name" value="PROTEIN_KINASE_DOM"/>
    <property type="match status" value="1"/>
</dbReference>
<dbReference type="PROSITE" id="PS00108">
    <property type="entry name" value="PROTEIN_KINASE_ST"/>
    <property type="match status" value="1"/>
</dbReference>
<sequence length="545" mass="60260">MGNYYSCGASSTSSPTSPSLVDYYYCYHRYPSSCSSTSTATSSGGRMPIRSHQQRLSSPTAVLGHETPALREVYTVGRKLGQGQFGTTYLCTQVSTGAEYACKSIAKRKLLSPEDVEDVRREIQIMHHLAGHGSVVTIQGAYEDNLYVHIVMELCEGGELFDRIVERGYFSERKAAEITRVIVGVVEACHSLGVMHRDLKPENFLLKESSSSSSLKAIDFGLSVFFKPGQVFSDVVGSPYYVAPEVLCKHYGPEADVWTAGVIVYILLSGVPPFWAETQQGIFDAVLRGSLDFDSDPWPTISDSAKDLIRRMLRSPPRERLTAHQVLCHPWVCDDGVAPDRPLAPAVLSRLKQFSAMNRLKKMALRVIARNLSEEELAGLKEMFKAMDTDASGAITFDELKEGLRRYGSNLREAEIRDLMDAADVDKSGTIDYDEFIAATVHLNKLEREEHLLAAFAYFDRDGSGYITVDELEHACRDHNMADVGIDDIIREVDQDNDGRIDYGEFVAMMKKGAIDIIGNGRLTIGRPTTATSDDPSPTISSSSR</sequence>
<comment type="function">
    <text evidence="1">May play a role in signal transduction pathways that involve calcium as a second messenger.</text>
</comment>
<comment type="catalytic activity">
    <reaction evidence="7">
        <text>L-seryl-[protein] + ATP = O-phospho-L-seryl-[protein] + ADP + H(+)</text>
        <dbReference type="Rhea" id="RHEA:17989"/>
        <dbReference type="Rhea" id="RHEA-COMP:9863"/>
        <dbReference type="Rhea" id="RHEA-COMP:11604"/>
        <dbReference type="ChEBI" id="CHEBI:15378"/>
        <dbReference type="ChEBI" id="CHEBI:29999"/>
        <dbReference type="ChEBI" id="CHEBI:30616"/>
        <dbReference type="ChEBI" id="CHEBI:83421"/>
        <dbReference type="ChEBI" id="CHEBI:456216"/>
        <dbReference type="EC" id="2.7.11.1"/>
    </reaction>
</comment>
<comment type="catalytic activity">
    <reaction evidence="7">
        <text>L-threonyl-[protein] + ATP = O-phospho-L-threonyl-[protein] + ADP + H(+)</text>
        <dbReference type="Rhea" id="RHEA:46608"/>
        <dbReference type="Rhea" id="RHEA-COMP:11060"/>
        <dbReference type="Rhea" id="RHEA-COMP:11605"/>
        <dbReference type="ChEBI" id="CHEBI:15378"/>
        <dbReference type="ChEBI" id="CHEBI:30013"/>
        <dbReference type="ChEBI" id="CHEBI:30616"/>
        <dbReference type="ChEBI" id="CHEBI:61977"/>
        <dbReference type="ChEBI" id="CHEBI:456216"/>
        <dbReference type="EC" id="2.7.11.1"/>
    </reaction>
</comment>
<comment type="activity regulation">
    <text evidence="1">Activated by calcium. Autophosphorylation may play an important role in the regulation of the kinase activity.</text>
</comment>
<comment type="subcellular location">
    <subcellularLocation>
        <location evidence="7">Membrane</location>
        <topology evidence="7">Lipid-anchor</topology>
    </subcellularLocation>
</comment>
<comment type="domain">
    <text evidence="1">There are 3 contiguous domains conserved in the CDPK subfamily: a kinase domain, an autoinhibitory (junction) domain and a calmodulin-like domain. The autoinhibitory domain (338-368) inactivates kinase activity under calcium-free conditions.</text>
</comment>
<comment type="similarity">
    <text evidence="7">Belongs to the protein kinase superfamily. Ser/Thr protein kinase family. CDPK subfamily.</text>
</comment>
<reference key="1">
    <citation type="journal article" date="2005" name="Nature">
        <title>The map-based sequence of the rice genome.</title>
        <authorList>
            <consortium name="International rice genome sequencing project (IRGSP)"/>
        </authorList>
    </citation>
    <scope>NUCLEOTIDE SEQUENCE [LARGE SCALE GENOMIC DNA]</scope>
    <source>
        <strain>cv. Nipponbare</strain>
    </source>
</reference>
<reference key="2">
    <citation type="journal article" date="2008" name="Nucleic Acids Res.">
        <title>The rice annotation project database (RAP-DB): 2008 update.</title>
        <authorList>
            <consortium name="The rice annotation project (RAP)"/>
        </authorList>
    </citation>
    <scope>GENOME REANNOTATION</scope>
    <source>
        <strain>cv. Nipponbare</strain>
    </source>
</reference>
<reference key="3">
    <citation type="journal article" date="2013" name="Rice">
        <title>Improvement of the Oryza sativa Nipponbare reference genome using next generation sequence and optical map data.</title>
        <authorList>
            <person name="Kawahara Y."/>
            <person name="de la Bastide M."/>
            <person name="Hamilton J.P."/>
            <person name="Kanamori H."/>
            <person name="McCombie W.R."/>
            <person name="Ouyang S."/>
            <person name="Schwartz D.C."/>
            <person name="Tanaka T."/>
            <person name="Wu J."/>
            <person name="Zhou S."/>
            <person name="Childs K.L."/>
            <person name="Davidson R.M."/>
            <person name="Lin H."/>
            <person name="Quesada-Ocampo L."/>
            <person name="Vaillancourt B."/>
            <person name="Sakai H."/>
            <person name="Lee S.S."/>
            <person name="Kim J."/>
            <person name="Numa H."/>
            <person name="Itoh T."/>
            <person name="Buell C.R."/>
            <person name="Matsumoto T."/>
        </authorList>
    </citation>
    <scope>GENOME REANNOTATION</scope>
    <source>
        <strain>cv. Nipponbare</strain>
    </source>
</reference>
<reference key="4">
    <citation type="journal article" date="2003" name="Science">
        <title>Collection, mapping, and annotation of over 28,000 cDNA clones from japonica rice.</title>
        <authorList>
            <consortium name="The rice full-length cDNA consortium"/>
        </authorList>
    </citation>
    <scope>NUCLEOTIDE SEQUENCE [LARGE SCALE MRNA]</scope>
    <source>
        <strain>cv. Nipponbare</strain>
    </source>
</reference>
<reference key="5">
    <citation type="journal article" date="2005" name="Plant Cell Physiol.">
        <title>Genome-wide identification of the rice calcium-dependent protein kinase and its closely related kinase gene families: comprehensive analysis of the CDPKs gene family in rice.</title>
        <authorList>
            <person name="Asano T."/>
            <person name="Tanaka N."/>
            <person name="Yang G."/>
            <person name="Hayashi N."/>
            <person name="Komatsu S."/>
        </authorList>
    </citation>
    <scope>GENE FAMILY</scope>
    <scope>NOMENCLATURE</scope>
</reference>
<name>CDPK6_ORYSJ</name>
<accession>Q6K968</accession>
<proteinExistence type="evidence at transcript level"/>
<gene>
    <name evidence="6" type="primary">CPK6</name>
    <name evidence="9" type="ordered locus">Os02g0832000</name>
    <name evidence="7" type="ordered locus">LOC_Os02g58520</name>
    <name evidence="8" type="ORF">OJ1149_C12.18</name>
</gene>
<protein>
    <recommendedName>
        <fullName evidence="7">Calcium-dependent protein kinase 6</fullName>
        <shortName evidence="7">OsCDPK6</shortName>
        <shortName evidence="6">OsCPK6</shortName>
        <ecNumber evidence="7">2.7.11.1</ecNumber>
    </recommendedName>
</protein>
<feature type="initiator methionine" description="Removed" evidence="2">
    <location>
        <position position="1"/>
    </location>
</feature>
<feature type="chain" id="PRO_0000437551" description="Calcium-dependent protein kinase 6">
    <location>
        <begin position="2"/>
        <end position="545"/>
    </location>
</feature>
<feature type="domain" description="Protein kinase" evidence="3">
    <location>
        <begin position="74"/>
        <end position="332"/>
    </location>
</feature>
<feature type="domain" description="EF-hand 1" evidence="4">
    <location>
        <begin position="375"/>
        <end position="410"/>
    </location>
</feature>
<feature type="domain" description="EF-hand 2" evidence="4">
    <location>
        <begin position="411"/>
        <end position="446"/>
    </location>
</feature>
<feature type="domain" description="EF-hand 3" evidence="4">
    <location>
        <begin position="447"/>
        <end position="482"/>
    </location>
</feature>
<feature type="domain" description="EF-hand 4" evidence="4">
    <location>
        <begin position="486"/>
        <end position="516"/>
    </location>
</feature>
<feature type="region of interest" description="Disordered" evidence="5">
    <location>
        <begin position="34"/>
        <end position="58"/>
    </location>
</feature>
<feature type="region of interest" description="Autoinhibitory domain" evidence="1">
    <location>
        <begin position="338"/>
        <end position="368"/>
    </location>
</feature>
<feature type="region of interest" description="Disordered" evidence="5">
    <location>
        <begin position="526"/>
        <end position="545"/>
    </location>
</feature>
<feature type="compositionally biased region" description="Low complexity" evidence="5">
    <location>
        <begin position="34"/>
        <end position="43"/>
    </location>
</feature>
<feature type="compositionally biased region" description="Low complexity" evidence="5">
    <location>
        <begin position="528"/>
        <end position="545"/>
    </location>
</feature>
<feature type="active site" description="Proton acceptor" evidence="3">
    <location>
        <position position="198"/>
    </location>
</feature>
<feature type="binding site" evidence="3">
    <location>
        <begin position="80"/>
        <end position="88"/>
    </location>
    <ligand>
        <name>ATP</name>
        <dbReference type="ChEBI" id="CHEBI:30616"/>
    </ligand>
</feature>
<feature type="binding site" evidence="3">
    <location>
        <position position="103"/>
    </location>
    <ligand>
        <name>ATP</name>
        <dbReference type="ChEBI" id="CHEBI:30616"/>
    </ligand>
</feature>
<feature type="binding site" evidence="4">
    <location>
        <position position="388"/>
    </location>
    <ligand>
        <name>Ca(2+)</name>
        <dbReference type="ChEBI" id="CHEBI:29108"/>
        <label>1</label>
    </ligand>
</feature>
<feature type="binding site" evidence="4">
    <location>
        <position position="390"/>
    </location>
    <ligand>
        <name>Ca(2+)</name>
        <dbReference type="ChEBI" id="CHEBI:29108"/>
        <label>1</label>
    </ligand>
</feature>
<feature type="binding site" evidence="4">
    <location>
        <position position="392"/>
    </location>
    <ligand>
        <name>Ca(2+)</name>
        <dbReference type="ChEBI" id="CHEBI:29108"/>
        <label>1</label>
    </ligand>
</feature>
<feature type="binding site" evidence="4">
    <location>
        <position position="399"/>
    </location>
    <ligand>
        <name>Ca(2+)</name>
        <dbReference type="ChEBI" id="CHEBI:29108"/>
        <label>1</label>
    </ligand>
</feature>
<feature type="binding site" evidence="4">
    <location>
        <position position="424"/>
    </location>
    <ligand>
        <name>Ca(2+)</name>
        <dbReference type="ChEBI" id="CHEBI:29108"/>
        <label>2</label>
    </ligand>
</feature>
<feature type="binding site" evidence="4">
    <location>
        <position position="426"/>
    </location>
    <ligand>
        <name>Ca(2+)</name>
        <dbReference type="ChEBI" id="CHEBI:29108"/>
        <label>2</label>
    </ligand>
</feature>
<feature type="binding site" evidence="4">
    <location>
        <position position="428"/>
    </location>
    <ligand>
        <name>Ca(2+)</name>
        <dbReference type="ChEBI" id="CHEBI:29108"/>
        <label>2</label>
    </ligand>
</feature>
<feature type="binding site" evidence="4">
    <location>
        <position position="430"/>
    </location>
    <ligand>
        <name>Ca(2+)</name>
        <dbReference type="ChEBI" id="CHEBI:29108"/>
        <label>2</label>
    </ligand>
</feature>
<feature type="binding site" evidence="4">
    <location>
        <position position="435"/>
    </location>
    <ligand>
        <name>Ca(2+)</name>
        <dbReference type="ChEBI" id="CHEBI:29108"/>
        <label>2</label>
    </ligand>
</feature>
<feature type="binding site" evidence="4">
    <location>
        <position position="460"/>
    </location>
    <ligand>
        <name>Ca(2+)</name>
        <dbReference type="ChEBI" id="CHEBI:29108"/>
        <label>3</label>
    </ligand>
</feature>
<feature type="binding site" evidence="4">
    <location>
        <position position="462"/>
    </location>
    <ligand>
        <name>Ca(2+)</name>
        <dbReference type="ChEBI" id="CHEBI:29108"/>
        <label>3</label>
    </ligand>
</feature>
<feature type="binding site" evidence="4">
    <location>
        <position position="464"/>
    </location>
    <ligand>
        <name>Ca(2+)</name>
        <dbReference type="ChEBI" id="CHEBI:29108"/>
        <label>3</label>
    </ligand>
</feature>
<feature type="binding site" evidence="4">
    <location>
        <position position="466"/>
    </location>
    <ligand>
        <name>Ca(2+)</name>
        <dbReference type="ChEBI" id="CHEBI:29108"/>
        <label>3</label>
    </ligand>
</feature>
<feature type="binding site" evidence="4">
    <location>
        <position position="471"/>
    </location>
    <ligand>
        <name>Ca(2+)</name>
        <dbReference type="ChEBI" id="CHEBI:29108"/>
        <label>3</label>
    </ligand>
</feature>
<feature type="binding site" evidence="4">
    <location>
        <position position="494"/>
    </location>
    <ligand>
        <name>Ca(2+)</name>
        <dbReference type="ChEBI" id="CHEBI:29108"/>
        <label>4</label>
    </ligand>
</feature>
<feature type="binding site" evidence="4">
    <location>
        <position position="496"/>
    </location>
    <ligand>
        <name>Ca(2+)</name>
        <dbReference type="ChEBI" id="CHEBI:29108"/>
        <label>4</label>
    </ligand>
</feature>
<feature type="binding site" evidence="4">
    <location>
        <position position="498"/>
    </location>
    <ligand>
        <name>Ca(2+)</name>
        <dbReference type="ChEBI" id="CHEBI:29108"/>
        <label>4</label>
    </ligand>
</feature>
<feature type="binding site" evidence="4">
    <location>
        <position position="500"/>
    </location>
    <ligand>
        <name>Ca(2+)</name>
        <dbReference type="ChEBI" id="CHEBI:29108"/>
        <label>4</label>
    </ligand>
</feature>
<feature type="binding site" evidence="4">
    <location>
        <position position="505"/>
    </location>
    <ligand>
        <name>Ca(2+)</name>
        <dbReference type="ChEBI" id="CHEBI:29108"/>
        <label>4</label>
    </ligand>
</feature>
<feature type="lipid moiety-binding region" description="N-myristoyl glycine" evidence="2">
    <location>
        <position position="2"/>
    </location>
</feature>
<evidence type="ECO:0000250" key="1">
    <source>
        <dbReference type="UniProtKB" id="Q06850"/>
    </source>
</evidence>
<evidence type="ECO:0000255" key="2"/>
<evidence type="ECO:0000255" key="3">
    <source>
        <dbReference type="PROSITE-ProRule" id="PRU00159"/>
    </source>
</evidence>
<evidence type="ECO:0000255" key="4">
    <source>
        <dbReference type="PROSITE-ProRule" id="PRU00448"/>
    </source>
</evidence>
<evidence type="ECO:0000256" key="5">
    <source>
        <dbReference type="SAM" id="MobiDB-lite"/>
    </source>
</evidence>
<evidence type="ECO:0000303" key="6">
    <source>
    </source>
</evidence>
<evidence type="ECO:0000305" key="7"/>
<evidence type="ECO:0000312" key="8">
    <source>
        <dbReference type="EMBL" id="BAD23010.1"/>
    </source>
</evidence>
<evidence type="ECO:0000312" key="9">
    <source>
        <dbReference type="EMBL" id="BAF10538.1"/>
    </source>
</evidence>